<comment type="function">
    <text evidence="1">Part of the ABC transporter complex AraFGH involved in arabinose import. Responsible for energy coupling to the transport system.</text>
</comment>
<comment type="catalytic activity">
    <reaction evidence="1">
        <text>L-arabinose(out) + ATP + H2O = L-arabinose(in) + ADP + phosphate + H(+)</text>
        <dbReference type="Rhea" id="RHEA:30007"/>
        <dbReference type="ChEBI" id="CHEBI:15377"/>
        <dbReference type="ChEBI" id="CHEBI:15378"/>
        <dbReference type="ChEBI" id="CHEBI:17535"/>
        <dbReference type="ChEBI" id="CHEBI:30616"/>
        <dbReference type="ChEBI" id="CHEBI:43474"/>
        <dbReference type="ChEBI" id="CHEBI:456216"/>
        <dbReference type="EC" id="7.5.2.12"/>
    </reaction>
</comment>
<comment type="subunit">
    <text evidence="1">The complex is composed of two ATP-binding proteins (AraG), two transmembrane proteins (AraH) and a solute-binding protein (AraF).</text>
</comment>
<comment type="subcellular location">
    <subcellularLocation>
        <location evidence="1">Cell inner membrane</location>
        <topology evidence="1">Peripheral membrane protein</topology>
    </subcellularLocation>
</comment>
<comment type="similarity">
    <text evidence="1">Belongs to the ABC transporter superfamily. Arabinose importer (TC 3.A.1.2.2) family.</text>
</comment>
<comment type="sequence caution" evidence="2">
    <conflict type="erroneous initiation">
        <sequence resource="EMBL-CDS" id="CAH36977"/>
    </conflict>
</comment>
<feature type="chain" id="PRO_0000270458" description="Arabinose import ATP-binding protein AraG">
    <location>
        <begin position="1"/>
        <end position="503"/>
    </location>
</feature>
<feature type="domain" description="ABC transporter 1" evidence="1">
    <location>
        <begin position="5"/>
        <end position="240"/>
    </location>
</feature>
<feature type="domain" description="ABC transporter 2" evidence="1">
    <location>
        <begin position="253"/>
        <end position="497"/>
    </location>
</feature>
<feature type="binding site" evidence="1">
    <location>
        <begin position="37"/>
        <end position="44"/>
    </location>
    <ligand>
        <name>ATP</name>
        <dbReference type="ChEBI" id="CHEBI:30616"/>
    </ligand>
</feature>
<reference key="1">
    <citation type="journal article" date="2004" name="Proc. Natl. Acad. Sci. U.S.A.">
        <title>Genomic plasticity of the causative agent of melioidosis, Burkholderia pseudomallei.</title>
        <authorList>
            <person name="Holden M.T.G."/>
            <person name="Titball R.W."/>
            <person name="Peacock S.J."/>
            <person name="Cerdeno-Tarraga A.-M."/>
            <person name="Atkins T."/>
            <person name="Crossman L.C."/>
            <person name="Pitt T."/>
            <person name="Churcher C."/>
            <person name="Mungall K.L."/>
            <person name="Bentley S.D."/>
            <person name="Sebaihia M."/>
            <person name="Thomson N.R."/>
            <person name="Bason N."/>
            <person name="Beacham I.R."/>
            <person name="Brooks K."/>
            <person name="Brown K.A."/>
            <person name="Brown N.F."/>
            <person name="Challis G.L."/>
            <person name="Cherevach I."/>
            <person name="Chillingworth T."/>
            <person name="Cronin A."/>
            <person name="Crossett B."/>
            <person name="Davis P."/>
            <person name="DeShazer D."/>
            <person name="Feltwell T."/>
            <person name="Fraser A."/>
            <person name="Hance Z."/>
            <person name="Hauser H."/>
            <person name="Holroyd S."/>
            <person name="Jagels K."/>
            <person name="Keith K.E."/>
            <person name="Maddison M."/>
            <person name="Moule S."/>
            <person name="Price C."/>
            <person name="Quail M.A."/>
            <person name="Rabbinowitsch E."/>
            <person name="Rutherford K."/>
            <person name="Sanders M."/>
            <person name="Simmonds M."/>
            <person name="Songsivilai S."/>
            <person name="Stevens K."/>
            <person name="Tumapa S."/>
            <person name="Vesaratchavest M."/>
            <person name="Whitehead S."/>
            <person name="Yeats C."/>
            <person name="Barrell B.G."/>
            <person name="Oyston P.C.F."/>
            <person name="Parkhill J."/>
        </authorList>
    </citation>
    <scope>NUCLEOTIDE SEQUENCE [LARGE SCALE GENOMIC DNA]</scope>
    <source>
        <strain>K96243</strain>
    </source>
</reference>
<dbReference type="EC" id="7.5.2.12" evidence="1"/>
<dbReference type="EMBL" id="BX571965">
    <property type="protein sequence ID" value="CAH36977.1"/>
    <property type="status" value="ALT_INIT"/>
    <property type="molecule type" value="Genomic_DNA"/>
</dbReference>
<dbReference type="RefSeq" id="WP_009938735.1">
    <property type="nucleotide sequence ID" value="NC_006350.1"/>
</dbReference>
<dbReference type="RefSeq" id="YP_109561.2">
    <property type="nucleotide sequence ID" value="NC_006350.1"/>
</dbReference>
<dbReference type="SMR" id="Q63QQ7"/>
<dbReference type="STRING" id="272560.BPSL2967"/>
<dbReference type="KEGG" id="bps:BPSL2967"/>
<dbReference type="PATRIC" id="fig|272560.51.peg.2308"/>
<dbReference type="eggNOG" id="COG1129">
    <property type="taxonomic scope" value="Bacteria"/>
</dbReference>
<dbReference type="Proteomes" id="UP000000605">
    <property type="component" value="Chromosome 1"/>
</dbReference>
<dbReference type="GO" id="GO:0005886">
    <property type="term" value="C:plasma membrane"/>
    <property type="evidence" value="ECO:0007669"/>
    <property type="project" value="UniProtKB-SubCell"/>
</dbReference>
<dbReference type="GO" id="GO:0015612">
    <property type="term" value="F:ABC-type L-arabinose transporter activity"/>
    <property type="evidence" value="ECO:0007669"/>
    <property type="project" value="UniProtKB-EC"/>
</dbReference>
<dbReference type="GO" id="GO:0005524">
    <property type="term" value="F:ATP binding"/>
    <property type="evidence" value="ECO:0007669"/>
    <property type="project" value="UniProtKB-KW"/>
</dbReference>
<dbReference type="GO" id="GO:0016887">
    <property type="term" value="F:ATP hydrolysis activity"/>
    <property type="evidence" value="ECO:0007669"/>
    <property type="project" value="InterPro"/>
</dbReference>
<dbReference type="CDD" id="cd03216">
    <property type="entry name" value="ABC_Carb_Monos_I"/>
    <property type="match status" value="1"/>
</dbReference>
<dbReference type="CDD" id="cd03215">
    <property type="entry name" value="ABC_Carb_Monos_II"/>
    <property type="match status" value="1"/>
</dbReference>
<dbReference type="FunFam" id="3.40.50.300:FF:000126">
    <property type="entry name" value="Galactose/methyl galactoside import ATP-binding protein MglA"/>
    <property type="match status" value="1"/>
</dbReference>
<dbReference type="FunFam" id="3.40.50.300:FF:000127">
    <property type="entry name" value="Ribose import ATP-binding protein RbsA"/>
    <property type="match status" value="1"/>
</dbReference>
<dbReference type="Gene3D" id="3.40.50.300">
    <property type="entry name" value="P-loop containing nucleotide triphosphate hydrolases"/>
    <property type="match status" value="2"/>
</dbReference>
<dbReference type="InterPro" id="IPR003593">
    <property type="entry name" value="AAA+_ATPase"/>
</dbReference>
<dbReference type="InterPro" id="IPR050107">
    <property type="entry name" value="ABC_carbohydrate_import_ATPase"/>
</dbReference>
<dbReference type="InterPro" id="IPR003439">
    <property type="entry name" value="ABC_transporter-like_ATP-bd"/>
</dbReference>
<dbReference type="InterPro" id="IPR017871">
    <property type="entry name" value="ABC_transporter-like_CS"/>
</dbReference>
<dbReference type="InterPro" id="IPR027417">
    <property type="entry name" value="P-loop_NTPase"/>
</dbReference>
<dbReference type="NCBIfam" id="NF008442">
    <property type="entry name" value="PRK11288.1"/>
    <property type="match status" value="1"/>
</dbReference>
<dbReference type="PANTHER" id="PTHR43790:SF6">
    <property type="entry name" value="ARABINOSE IMPORT ATP-BINDING PROTEIN ARAG"/>
    <property type="match status" value="1"/>
</dbReference>
<dbReference type="PANTHER" id="PTHR43790">
    <property type="entry name" value="CARBOHYDRATE TRANSPORT ATP-BINDING PROTEIN MG119-RELATED"/>
    <property type="match status" value="1"/>
</dbReference>
<dbReference type="Pfam" id="PF00005">
    <property type="entry name" value="ABC_tran"/>
    <property type="match status" value="2"/>
</dbReference>
<dbReference type="SMART" id="SM00382">
    <property type="entry name" value="AAA"/>
    <property type="match status" value="2"/>
</dbReference>
<dbReference type="SUPFAM" id="SSF52540">
    <property type="entry name" value="P-loop containing nucleoside triphosphate hydrolases"/>
    <property type="match status" value="2"/>
</dbReference>
<dbReference type="PROSITE" id="PS00211">
    <property type="entry name" value="ABC_TRANSPORTER_1"/>
    <property type="match status" value="1"/>
</dbReference>
<dbReference type="PROSITE" id="PS50893">
    <property type="entry name" value="ABC_TRANSPORTER_2"/>
    <property type="match status" value="2"/>
</dbReference>
<dbReference type="PROSITE" id="PS51268">
    <property type="entry name" value="ARAG"/>
    <property type="match status" value="1"/>
</dbReference>
<proteinExistence type="inferred from homology"/>
<organism>
    <name type="scientific">Burkholderia pseudomallei (strain K96243)</name>
    <dbReference type="NCBI Taxonomy" id="272560"/>
    <lineage>
        <taxon>Bacteria</taxon>
        <taxon>Pseudomonadati</taxon>
        <taxon>Pseudomonadota</taxon>
        <taxon>Betaproteobacteria</taxon>
        <taxon>Burkholderiales</taxon>
        <taxon>Burkholderiaceae</taxon>
        <taxon>Burkholderia</taxon>
        <taxon>pseudomallei group</taxon>
    </lineage>
</organism>
<gene>
    <name evidence="1" type="primary">araG</name>
    <name type="ordered locus">BPSL2967</name>
</gene>
<protein>
    <recommendedName>
        <fullName evidence="1">Arabinose import ATP-binding protein AraG</fullName>
        <ecNumber evidence="1">7.5.2.12</ecNumber>
    </recommendedName>
</protein>
<keyword id="KW-0067">ATP-binding</keyword>
<keyword id="KW-0997">Cell inner membrane</keyword>
<keyword id="KW-1003">Cell membrane</keyword>
<keyword id="KW-0472">Membrane</keyword>
<keyword id="KW-0547">Nucleotide-binding</keyword>
<keyword id="KW-1185">Reference proteome</keyword>
<keyword id="KW-0677">Repeat</keyword>
<keyword id="KW-0762">Sugar transport</keyword>
<keyword id="KW-1278">Translocase</keyword>
<keyword id="KW-0813">Transport</keyword>
<name>ARAG_BURPS</name>
<accession>Q63QQ7</accession>
<sequence>MAAALRFDNIGKVFPGVRALDGISFDVQAGQVHGLMGENGAGKSTLLKILGGEYQPDSGSVLVDGRAMRFPSAAASIAAGVAVIHQELQYVPDLTVAENLLLGRLPSALGWVRKRDAQRFVRERLAAMGVDLDAQAKLRRLSIAQRQMVEICKALLRNARVIALDEPTSSLSHRETEVLFKLVDDLRRDGRALIYISHRMDEIYRLCDACTIFRDGRQVASHASLANVPRETLVRQMVGREISDIYHYAPRALGDVRLSARALEGDALRAGASFDVRAGEIVGFFGLVGAGRSELMRVIYGAQRRTGGALTLDGEPLDIRSTRDAIRRGIVLCPEDRKEEGIVAHASVAENINISCRRHGLRAGLFLDRKREAETADRFIKLLKIKTPNRRQKIRFLSGGNQQKAILARWLAEPDLKVVILDEPTRGIDVGAKHEIYGVIYELAKRGCAIVMVSSELPEVLGVSDRIVVMSEGRIAGELARGEANEEAVLNLALPQGATAHAA</sequence>
<evidence type="ECO:0000255" key="1">
    <source>
        <dbReference type="HAMAP-Rule" id="MF_01721"/>
    </source>
</evidence>
<evidence type="ECO:0000305" key="2"/>